<gene>
    <name evidence="1" type="primary">rplA</name>
    <name type="ordered locus">BB0011</name>
</gene>
<protein>
    <recommendedName>
        <fullName evidence="1">Large ribosomal subunit protein uL1</fullName>
    </recommendedName>
    <alternativeName>
        <fullName evidence="2">50S ribosomal protein L1</fullName>
    </alternativeName>
</protein>
<reference key="1">
    <citation type="journal article" date="2003" name="Nat. Genet.">
        <title>Comparative analysis of the genome sequences of Bordetella pertussis, Bordetella parapertussis and Bordetella bronchiseptica.</title>
        <authorList>
            <person name="Parkhill J."/>
            <person name="Sebaihia M."/>
            <person name="Preston A."/>
            <person name="Murphy L.D."/>
            <person name="Thomson N.R."/>
            <person name="Harris D.E."/>
            <person name="Holden M.T.G."/>
            <person name="Churcher C.M."/>
            <person name="Bentley S.D."/>
            <person name="Mungall K.L."/>
            <person name="Cerdeno-Tarraga A.-M."/>
            <person name="Temple L."/>
            <person name="James K.D."/>
            <person name="Harris B."/>
            <person name="Quail M.A."/>
            <person name="Achtman M."/>
            <person name="Atkin R."/>
            <person name="Baker S."/>
            <person name="Basham D."/>
            <person name="Bason N."/>
            <person name="Cherevach I."/>
            <person name="Chillingworth T."/>
            <person name="Collins M."/>
            <person name="Cronin A."/>
            <person name="Davis P."/>
            <person name="Doggett J."/>
            <person name="Feltwell T."/>
            <person name="Goble A."/>
            <person name="Hamlin N."/>
            <person name="Hauser H."/>
            <person name="Holroyd S."/>
            <person name="Jagels K."/>
            <person name="Leather S."/>
            <person name="Moule S."/>
            <person name="Norberczak H."/>
            <person name="O'Neil S."/>
            <person name="Ormond D."/>
            <person name="Price C."/>
            <person name="Rabbinowitsch E."/>
            <person name="Rutter S."/>
            <person name="Sanders M."/>
            <person name="Saunders D."/>
            <person name="Seeger K."/>
            <person name="Sharp S."/>
            <person name="Simmonds M."/>
            <person name="Skelton J."/>
            <person name="Squares R."/>
            <person name="Squares S."/>
            <person name="Stevens K."/>
            <person name="Unwin L."/>
            <person name="Whitehead S."/>
            <person name="Barrell B.G."/>
            <person name="Maskell D.J."/>
        </authorList>
    </citation>
    <scope>NUCLEOTIDE SEQUENCE [LARGE SCALE GENOMIC DNA]</scope>
    <source>
        <strain>ATCC BAA-588 / NCTC 13252 / RB50</strain>
    </source>
</reference>
<sequence length="232" mass="23980">MAKLSKRAAAIAQKIDRTKLYPVGEALNLVKETATAKFDESIDVAVQLGIDPKKSDQLVRGSVVLPAGTGKTVRVAVFAQGEKADAARAAGADIVGLDDLAEQIKAGQMDFDVVIASPDTMRVVGALGQVLGPRGLMPNPKVGTVTPDVATAVKNAKAGQIQYRTDKAGIIHATIGRASFGVEQLQNNLAALVDALQKARPAAAKGIYLRKLAVSSTMGGGARVEIASLSAN</sequence>
<comment type="function">
    <text evidence="1">Binds directly to 23S rRNA. The L1 stalk is quite mobile in the ribosome, and is involved in E site tRNA release.</text>
</comment>
<comment type="function">
    <text evidence="1">Protein L1 is also a translational repressor protein, it controls the translation of the L11 operon by binding to its mRNA.</text>
</comment>
<comment type="subunit">
    <text evidence="1">Part of the 50S ribosomal subunit.</text>
</comment>
<comment type="similarity">
    <text evidence="1">Belongs to the universal ribosomal protein uL1 family.</text>
</comment>
<name>RL1_BORBR</name>
<organism>
    <name type="scientific">Bordetella bronchiseptica (strain ATCC BAA-588 / NCTC 13252 / RB50)</name>
    <name type="common">Alcaligenes bronchisepticus</name>
    <dbReference type="NCBI Taxonomy" id="257310"/>
    <lineage>
        <taxon>Bacteria</taxon>
        <taxon>Pseudomonadati</taxon>
        <taxon>Pseudomonadota</taxon>
        <taxon>Betaproteobacteria</taxon>
        <taxon>Burkholderiales</taxon>
        <taxon>Alcaligenaceae</taxon>
        <taxon>Bordetella</taxon>
    </lineage>
</organism>
<feature type="chain" id="PRO_0000125622" description="Large ribosomal subunit protein uL1">
    <location>
        <begin position="1"/>
        <end position="232"/>
    </location>
</feature>
<accession>Q7WRE2</accession>
<proteinExistence type="inferred from homology"/>
<evidence type="ECO:0000255" key="1">
    <source>
        <dbReference type="HAMAP-Rule" id="MF_01318"/>
    </source>
</evidence>
<evidence type="ECO:0000305" key="2"/>
<keyword id="KW-0678">Repressor</keyword>
<keyword id="KW-0687">Ribonucleoprotein</keyword>
<keyword id="KW-0689">Ribosomal protein</keyword>
<keyword id="KW-0694">RNA-binding</keyword>
<keyword id="KW-0699">rRNA-binding</keyword>
<keyword id="KW-0810">Translation regulation</keyword>
<keyword id="KW-0820">tRNA-binding</keyword>
<dbReference type="EMBL" id="BX640437">
    <property type="protein sequence ID" value="CAE30513.1"/>
    <property type="molecule type" value="Genomic_DNA"/>
</dbReference>
<dbReference type="RefSeq" id="WP_003806887.1">
    <property type="nucleotide sequence ID" value="NC_002927.3"/>
</dbReference>
<dbReference type="SMR" id="Q7WRE2"/>
<dbReference type="GeneID" id="93206240"/>
<dbReference type="KEGG" id="bbr:BB0011"/>
<dbReference type="eggNOG" id="COG0081">
    <property type="taxonomic scope" value="Bacteria"/>
</dbReference>
<dbReference type="HOGENOM" id="CLU_062853_0_0_4"/>
<dbReference type="Proteomes" id="UP000001027">
    <property type="component" value="Chromosome"/>
</dbReference>
<dbReference type="GO" id="GO:0022625">
    <property type="term" value="C:cytosolic large ribosomal subunit"/>
    <property type="evidence" value="ECO:0007669"/>
    <property type="project" value="TreeGrafter"/>
</dbReference>
<dbReference type="GO" id="GO:0019843">
    <property type="term" value="F:rRNA binding"/>
    <property type="evidence" value="ECO:0007669"/>
    <property type="project" value="UniProtKB-UniRule"/>
</dbReference>
<dbReference type="GO" id="GO:0003735">
    <property type="term" value="F:structural constituent of ribosome"/>
    <property type="evidence" value="ECO:0007669"/>
    <property type="project" value="InterPro"/>
</dbReference>
<dbReference type="GO" id="GO:0000049">
    <property type="term" value="F:tRNA binding"/>
    <property type="evidence" value="ECO:0007669"/>
    <property type="project" value="UniProtKB-KW"/>
</dbReference>
<dbReference type="GO" id="GO:0006417">
    <property type="term" value="P:regulation of translation"/>
    <property type="evidence" value="ECO:0007669"/>
    <property type="project" value="UniProtKB-KW"/>
</dbReference>
<dbReference type="GO" id="GO:0006412">
    <property type="term" value="P:translation"/>
    <property type="evidence" value="ECO:0007669"/>
    <property type="project" value="UniProtKB-UniRule"/>
</dbReference>
<dbReference type="CDD" id="cd00403">
    <property type="entry name" value="Ribosomal_L1"/>
    <property type="match status" value="1"/>
</dbReference>
<dbReference type="FunFam" id="3.40.50.790:FF:000001">
    <property type="entry name" value="50S ribosomal protein L1"/>
    <property type="match status" value="1"/>
</dbReference>
<dbReference type="Gene3D" id="3.30.190.20">
    <property type="match status" value="1"/>
</dbReference>
<dbReference type="Gene3D" id="3.40.50.790">
    <property type="match status" value="1"/>
</dbReference>
<dbReference type="HAMAP" id="MF_01318_B">
    <property type="entry name" value="Ribosomal_uL1_B"/>
    <property type="match status" value="1"/>
</dbReference>
<dbReference type="InterPro" id="IPR005878">
    <property type="entry name" value="Ribosom_uL1_bac-type"/>
</dbReference>
<dbReference type="InterPro" id="IPR002143">
    <property type="entry name" value="Ribosomal_uL1"/>
</dbReference>
<dbReference type="InterPro" id="IPR023674">
    <property type="entry name" value="Ribosomal_uL1-like"/>
</dbReference>
<dbReference type="InterPro" id="IPR028364">
    <property type="entry name" value="Ribosomal_uL1/biogenesis"/>
</dbReference>
<dbReference type="InterPro" id="IPR016095">
    <property type="entry name" value="Ribosomal_uL1_3-a/b-sand"/>
</dbReference>
<dbReference type="InterPro" id="IPR023673">
    <property type="entry name" value="Ribosomal_uL1_CS"/>
</dbReference>
<dbReference type="NCBIfam" id="TIGR01169">
    <property type="entry name" value="rplA_bact"/>
    <property type="match status" value="1"/>
</dbReference>
<dbReference type="PANTHER" id="PTHR36427">
    <property type="entry name" value="54S RIBOSOMAL PROTEIN L1, MITOCHONDRIAL"/>
    <property type="match status" value="1"/>
</dbReference>
<dbReference type="PANTHER" id="PTHR36427:SF3">
    <property type="entry name" value="LARGE RIBOSOMAL SUBUNIT PROTEIN UL1M"/>
    <property type="match status" value="1"/>
</dbReference>
<dbReference type="Pfam" id="PF00687">
    <property type="entry name" value="Ribosomal_L1"/>
    <property type="match status" value="1"/>
</dbReference>
<dbReference type="PIRSF" id="PIRSF002155">
    <property type="entry name" value="Ribosomal_L1"/>
    <property type="match status" value="1"/>
</dbReference>
<dbReference type="SUPFAM" id="SSF56808">
    <property type="entry name" value="Ribosomal protein L1"/>
    <property type="match status" value="1"/>
</dbReference>
<dbReference type="PROSITE" id="PS01199">
    <property type="entry name" value="RIBOSOMAL_L1"/>
    <property type="match status" value="1"/>
</dbReference>